<organism>
    <name type="scientific">Danio rerio</name>
    <name type="common">Zebrafish</name>
    <name type="synonym">Brachydanio rerio</name>
    <dbReference type="NCBI Taxonomy" id="7955"/>
    <lineage>
        <taxon>Eukaryota</taxon>
        <taxon>Metazoa</taxon>
        <taxon>Chordata</taxon>
        <taxon>Craniata</taxon>
        <taxon>Vertebrata</taxon>
        <taxon>Euteleostomi</taxon>
        <taxon>Actinopterygii</taxon>
        <taxon>Neopterygii</taxon>
        <taxon>Teleostei</taxon>
        <taxon>Ostariophysi</taxon>
        <taxon>Cypriniformes</taxon>
        <taxon>Danionidae</taxon>
        <taxon>Danioninae</taxon>
        <taxon>Danio</taxon>
    </lineage>
</organism>
<reference key="1">
    <citation type="journal article" date="2013" name="Nature">
        <title>The zebrafish reference genome sequence and its relationship to the human genome.</title>
        <authorList>
            <person name="Howe K."/>
            <person name="Clark M.D."/>
            <person name="Torroja C.F."/>
            <person name="Torrance J."/>
            <person name="Berthelot C."/>
            <person name="Muffato M."/>
            <person name="Collins J.E."/>
            <person name="Humphray S."/>
            <person name="McLaren K."/>
            <person name="Matthews L."/>
            <person name="McLaren S."/>
            <person name="Sealy I."/>
            <person name="Caccamo M."/>
            <person name="Churcher C."/>
            <person name="Scott C."/>
            <person name="Barrett J.C."/>
            <person name="Koch R."/>
            <person name="Rauch G.J."/>
            <person name="White S."/>
            <person name="Chow W."/>
            <person name="Kilian B."/>
            <person name="Quintais L.T."/>
            <person name="Guerra-Assuncao J.A."/>
            <person name="Zhou Y."/>
            <person name="Gu Y."/>
            <person name="Yen J."/>
            <person name="Vogel J.H."/>
            <person name="Eyre T."/>
            <person name="Redmond S."/>
            <person name="Banerjee R."/>
            <person name="Chi J."/>
            <person name="Fu B."/>
            <person name="Langley E."/>
            <person name="Maguire S.F."/>
            <person name="Laird G.K."/>
            <person name="Lloyd D."/>
            <person name="Kenyon E."/>
            <person name="Donaldson S."/>
            <person name="Sehra H."/>
            <person name="Almeida-King J."/>
            <person name="Loveland J."/>
            <person name="Trevanion S."/>
            <person name="Jones M."/>
            <person name="Quail M."/>
            <person name="Willey D."/>
            <person name="Hunt A."/>
            <person name="Burton J."/>
            <person name="Sims S."/>
            <person name="McLay K."/>
            <person name="Plumb B."/>
            <person name="Davis J."/>
            <person name="Clee C."/>
            <person name="Oliver K."/>
            <person name="Clark R."/>
            <person name="Riddle C."/>
            <person name="Elliot D."/>
            <person name="Threadgold G."/>
            <person name="Harden G."/>
            <person name="Ware D."/>
            <person name="Begum S."/>
            <person name="Mortimore B."/>
            <person name="Kerry G."/>
            <person name="Heath P."/>
            <person name="Phillimore B."/>
            <person name="Tracey A."/>
            <person name="Corby N."/>
            <person name="Dunn M."/>
            <person name="Johnson C."/>
            <person name="Wood J."/>
            <person name="Clark S."/>
            <person name="Pelan S."/>
            <person name="Griffiths G."/>
            <person name="Smith M."/>
            <person name="Glithero R."/>
            <person name="Howden P."/>
            <person name="Barker N."/>
            <person name="Lloyd C."/>
            <person name="Stevens C."/>
            <person name="Harley J."/>
            <person name="Holt K."/>
            <person name="Panagiotidis G."/>
            <person name="Lovell J."/>
            <person name="Beasley H."/>
            <person name="Henderson C."/>
            <person name="Gordon D."/>
            <person name="Auger K."/>
            <person name="Wright D."/>
            <person name="Collins J."/>
            <person name="Raisen C."/>
            <person name="Dyer L."/>
            <person name="Leung K."/>
            <person name="Robertson L."/>
            <person name="Ambridge K."/>
            <person name="Leongamornlert D."/>
            <person name="McGuire S."/>
            <person name="Gilderthorp R."/>
            <person name="Griffiths C."/>
            <person name="Manthravadi D."/>
            <person name="Nichol S."/>
            <person name="Barker G."/>
            <person name="Whitehead S."/>
            <person name="Kay M."/>
            <person name="Brown J."/>
            <person name="Murnane C."/>
            <person name="Gray E."/>
            <person name="Humphries M."/>
            <person name="Sycamore N."/>
            <person name="Barker D."/>
            <person name="Saunders D."/>
            <person name="Wallis J."/>
            <person name="Babbage A."/>
            <person name="Hammond S."/>
            <person name="Mashreghi-Mohammadi M."/>
            <person name="Barr L."/>
            <person name="Martin S."/>
            <person name="Wray P."/>
            <person name="Ellington A."/>
            <person name="Matthews N."/>
            <person name="Ellwood M."/>
            <person name="Woodmansey R."/>
            <person name="Clark G."/>
            <person name="Cooper J."/>
            <person name="Tromans A."/>
            <person name="Grafham D."/>
            <person name="Skuce C."/>
            <person name="Pandian R."/>
            <person name="Andrews R."/>
            <person name="Harrison E."/>
            <person name="Kimberley A."/>
            <person name="Garnett J."/>
            <person name="Fosker N."/>
            <person name="Hall R."/>
            <person name="Garner P."/>
            <person name="Kelly D."/>
            <person name="Bird C."/>
            <person name="Palmer S."/>
            <person name="Gehring I."/>
            <person name="Berger A."/>
            <person name="Dooley C.M."/>
            <person name="Ersan-Urun Z."/>
            <person name="Eser C."/>
            <person name="Geiger H."/>
            <person name="Geisler M."/>
            <person name="Karotki L."/>
            <person name="Kirn A."/>
            <person name="Konantz J."/>
            <person name="Konantz M."/>
            <person name="Oberlander M."/>
            <person name="Rudolph-Geiger S."/>
            <person name="Teucke M."/>
            <person name="Lanz C."/>
            <person name="Raddatz G."/>
            <person name="Osoegawa K."/>
            <person name="Zhu B."/>
            <person name="Rapp A."/>
            <person name="Widaa S."/>
            <person name="Langford C."/>
            <person name="Yang F."/>
            <person name="Schuster S.C."/>
            <person name="Carter N.P."/>
            <person name="Harrow J."/>
            <person name="Ning Z."/>
            <person name="Herrero J."/>
            <person name="Searle S.M."/>
            <person name="Enright A."/>
            <person name="Geisler R."/>
            <person name="Plasterk R.H."/>
            <person name="Lee C."/>
            <person name="Westerfield M."/>
            <person name="de Jong P.J."/>
            <person name="Zon L.I."/>
            <person name="Postlethwait J.H."/>
            <person name="Nusslein-Volhard C."/>
            <person name="Hubbard T.J."/>
            <person name="Roest Crollius H."/>
            <person name="Rogers J."/>
            <person name="Stemple D.L."/>
        </authorList>
    </citation>
    <scope>NUCLEOTIDE SEQUENCE [LARGE SCALE GENOMIC DNA]</scope>
    <source>
        <strain>Tuebingen</strain>
    </source>
</reference>
<reference key="2">
    <citation type="journal article" date="2021" name="Brain">
        <title>Bi-allelic variants in HOPS complex subunit VPS41 cause cerebellar ataxia and abnormal membrane trafficking.</title>
        <authorList>
            <person name="Sanderson L.E."/>
            <person name="Lanko K."/>
            <person name="Alsagob M."/>
            <person name="Almass R."/>
            <person name="Al-Ahmadi N."/>
            <person name="Najafi M."/>
            <person name="Al-Muhaizea M.A."/>
            <person name="Alzaidan H."/>
            <person name="AlDhalaan H."/>
            <person name="Perenthaler E."/>
            <person name="van der Linde H.C."/>
            <person name="Nikoncuk A."/>
            <person name="Kuehn N.A."/>
            <person name="Antony D."/>
            <person name="Owaidah T.M."/>
            <person name="Raskin S."/>
            <person name="Vieira L.G.D.R."/>
            <person name="Mombach R."/>
            <person name="Ahangari N."/>
            <person name="Silveira T.R.D."/>
            <person name="Ameziane N."/>
            <person name="Rolfs A."/>
            <person name="Alharbi A."/>
            <person name="Sabbagh R.M."/>
            <person name="AlAhmadi K."/>
            <person name="Alawam B."/>
            <person name="Ghebeh H."/>
            <person name="AlHargan A."/>
            <person name="Albader A.A."/>
            <person name="Binhumaid F.S."/>
            <person name="Goljan E."/>
            <person name="Monies D."/>
            <person name="Mustafa O.M."/>
            <person name="Aldosary M."/>
            <person name="AlBakheet A."/>
            <person name="Alyounes B."/>
            <person name="Almutairi F."/>
            <person name="Al-Odaib A."/>
            <person name="Aksoy D.B."/>
            <person name="Basak A.N."/>
            <person name="Palvadeau R."/>
            <person name="Trabzuni D."/>
            <person name="Rosenfeld J.A."/>
            <person name="Karimiani E.G."/>
            <person name="Meyer B.F."/>
            <person name="Karakas B."/>
            <person name="Al-Mohanna F."/>
            <person name="Arold S.T."/>
            <person name="Colak D."/>
            <person name="Maroofian R."/>
            <person name="Houlden H."/>
            <person name="Bertoli-Avella A.M."/>
            <person name="Schmidts M."/>
            <person name="Barakat T.S."/>
            <person name="van Ham T.J."/>
            <person name="Kaya N."/>
        </authorList>
    </citation>
    <scope>FUNCTION</scope>
    <scope>SUBUNIT</scope>
    <scope>DISRUPTION PHENOTYPE</scope>
</reference>
<gene>
    <name type="primary">vps41</name>
</gene>
<name>VPS41_DANRE</name>
<protein>
    <recommendedName>
        <fullName>Vacuolar protein sorting-associated protein 41 homolog</fullName>
    </recommendedName>
</protein>
<keyword id="KW-0072">Autophagy</keyword>
<keyword id="KW-0175">Coiled coil</keyword>
<keyword id="KW-0963">Cytoplasm</keyword>
<keyword id="KW-0968">Cytoplasmic vesicle</keyword>
<keyword id="KW-0967">Endosome</keyword>
<keyword id="KW-0333">Golgi apparatus</keyword>
<keyword id="KW-0458">Lysosome</keyword>
<keyword id="KW-0472">Membrane</keyword>
<keyword id="KW-0479">Metal-binding</keyword>
<keyword id="KW-0653">Protein transport</keyword>
<keyword id="KW-1185">Reference proteome</keyword>
<keyword id="KW-0813">Transport</keyword>
<keyword id="KW-0862">Zinc</keyword>
<keyword id="KW-0863">Zinc-finger</keyword>
<dbReference type="EMBL" id="BX571690">
    <property type="status" value="NOT_ANNOTATED_CDS"/>
    <property type="molecule type" value="Genomic_DNA"/>
</dbReference>
<dbReference type="EMBL" id="BX571823">
    <property type="status" value="NOT_ANNOTATED_CDS"/>
    <property type="molecule type" value="Genomic_DNA"/>
</dbReference>
<dbReference type="RefSeq" id="NP_001410716.1">
    <property type="nucleotide sequence ID" value="NM_001423787.1"/>
</dbReference>
<dbReference type="RefSeq" id="XP_691671.2">
    <property type="nucleotide sequence ID" value="XM_686579.6"/>
</dbReference>
<dbReference type="SMR" id="E7F590"/>
<dbReference type="FunCoup" id="E7F590">
    <property type="interactions" value="1752"/>
</dbReference>
<dbReference type="PeptideAtlas" id="E7F590"/>
<dbReference type="Ensembl" id="ENSDART00000092975">
    <property type="protein sequence ID" value="ENSDARP00000087407"/>
    <property type="gene ID" value="ENSDARG00000063573"/>
</dbReference>
<dbReference type="GeneID" id="563215"/>
<dbReference type="InParanoid" id="E7F590"/>
<dbReference type="OrthoDB" id="244107at2759"/>
<dbReference type="PhylomeDB" id="E7F590"/>
<dbReference type="PRO" id="PR:E7F590"/>
<dbReference type="Proteomes" id="UP000000437">
    <property type="component" value="Chromosome 24"/>
</dbReference>
<dbReference type="Bgee" id="ENSDARG00000063573">
    <property type="expression patterns" value="Expressed in spleen and 26 other cell types or tissues"/>
</dbReference>
<dbReference type="ExpressionAtlas" id="E7F590">
    <property type="expression patterns" value="baseline and differential"/>
</dbReference>
<dbReference type="GO" id="GO:0030136">
    <property type="term" value="C:clathrin-coated vesicle"/>
    <property type="evidence" value="ECO:0007669"/>
    <property type="project" value="UniProtKB-SubCell"/>
</dbReference>
<dbReference type="GO" id="GO:0005829">
    <property type="term" value="C:cytosol"/>
    <property type="evidence" value="ECO:0007669"/>
    <property type="project" value="UniProtKB-SubCell"/>
</dbReference>
<dbReference type="GO" id="GO:0031901">
    <property type="term" value="C:early endosome membrane"/>
    <property type="evidence" value="ECO:0007669"/>
    <property type="project" value="UniProtKB-SubCell"/>
</dbReference>
<dbReference type="GO" id="GO:0005794">
    <property type="term" value="C:Golgi apparatus"/>
    <property type="evidence" value="ECO:0007669"/>
    <property type="project" value="UniProtKB-SubCell"/>
</dbReference>
<dbReference type="GO" id="GO:0030897">
    <property type="term" value="C:HOPS complex"/>
    <property type="evidence" value="ECO:0000318"/>
    <property type="project" value="GO_Central"/>
</dbReference>
<dbReference type="GO" id="GO:0005770">
    <property type="term" value="C:late endosome"/>
    <property type="evidence" value="ECO:0000318"/>
    <property type="project" value="GO_Central"/>
</dbReference>
<dbReference type="GO" id="GO:0031902">
    <property type="term" value="C:late endosome membrane"/>
    <property type="evidence" value="ECO:0007669"/>
    <property type="project" value="UniProtKB-SubCell"/>
</dbReference>
<dbReference type="GO" id="GO:0005765">
    <property type="term" value="C:lysosomal membrane"/>
    <property type="evidence" value="ECO:0007669"/>
    <property type="project" value="UniProtKB-SubCell"/>
</dbReference>
<dbReference type="GO" id="GO:0008270">
    <property type="term" value="F:zinc ion binding"/>
    <property type="evidence" value="ECO:0007669"/>
    <property type="project" value="UniProtKB-KW"/>
</dbReference>
<dbReference type="GO" id="GO:0009267">
    <property type="term" value="P:cellular response to starvation"/>
    <property type="evidence" value="ECO:0000318"/>
    <property type="project" value="GO_Central"/>
</dbReference>
<dbReference type="GO" id="GO:0034058">
    <property type="term" value="P:endosomal vesicle fusion"/>
    <property type="evidence" value="ECO:0000318"/>
    <property type="project" value="GO_Central"/>
</dbReference>
<dbReference type="GO" id="GO:0008333">
    <property type="term" value="P:endosome to lysosome transport"/>
    <property type="evidence" value="ECO:0000315"/>
    <property type="project" value="UniProtKB"/>
</dbReference>
<dbReference type="GO" id="GO:0016236">
    <property type="term" value="P:macroautophagy"/>
    <property type="evidence" value="ECO:0000318"/>
    <property type="project" value="GO_Central"/>
</dbReference>
<dbReference type="GO" id="GO:0006623">
    <property type="term" value="P:protein targeting to vacuole"/>
    <property type="evidence" value="ECO:0000318"/>
    <property type="project" value="GO_Central"/>
</dbReference>
<dbReference type="CDD" id="cd16690">
    <property type="entry name" value="RING-H2_Vps41"/>
    <property type="match status" value="1"/>
</dbReference>
<dbReference type="FunFam" id="1.25.40.10:FF:000247">
    <property type="entry name" value="Vacuolar protein sorting-associated protein 41 homolog"/>
    <property type="match status" value="1"/>
</dbReference>
<dbReference type="FunFam" id="2.130.10.10:FF:000107">
    <property type="entry name" value="Vacuolar protein sorting-associated protein 41 homolog"/>
    <property type="match status" value="1"/>
</dbReference>
<dbReference type="Gene3D" id="1.25.40.10">
    <property type="entry name" value="Tetratricopeptide repeat domain"/>
    <property type="match status" value="1"/>
</dbReference>
<dbReference type="Gene3D" id="2.130.10.10">
    <property type="entry name" value="YVTN repeat-like/Quinoprotein amine dehydrogenase"/>
    <property type="match status" value="1"/>
</dbReference>
<dbReference type="InterPro" id="IPR000547">
    <property type="entry name" value="Clathrin_H-chain/VPS_repeat"/>
</dbReference>
<dbReference type="InterPro" id="IPR011990">
    <property type="entry name" value="TPR-like_helical_dom_sf"/>
</dbReference>
<dbReference type="InterPro" id="IPR016902">
    <property type="entry name" value="VPS41"/>
</dbReference>
<dbReference type="InterPro" id="IPR045111">
    <property type="entry name" value="Vps41/Vps8"/>
</dbReference>
<dbReference type="InterPro" id="IPR015943">
    <property type="entry name" value="WD40/YVTN_repeat-like_dom_sf"/>
</dbReference>
<dbReference type="InterPro" id="IPR036322">
    <property type="entry name" value="WD40_repeat_dom_sf"/>
</dbReference>
<dbReference type="InterPro" id="IPR001841">
    <property type="entry name" value="Znf_RING"/>
</dbReference>
<dbReference type="PANTHER" id="PTHR12616">
    <property type="entry name" value="VACUOLAR PROTEIN SORTING VPS41"/>
    <property type="match status" value="1"/>
</dbReference>
<dbReference type="PANTHER" id="PTHR12616:SF1">
    <property type="entry name" value="VACUOLAR PROTEIN SORTING-ASSOCIATED PROTEIN 41 HOMOLOG"/>
    <property type="match status" value="1"/>
</dbReference>
<dbReference type="Pfam" id="PF23411">
    <property type="entry name" value="Beta-prop_Vps41"/>
    <property type="match status" value="1"/>
</dbReference>
<dbReference type="Pfam" id="PF23556">
    <property type="entry name" value="TPR_Vps41"/>
    <property type="match status" value="1"/>
</dbReference>
<dbReference type="Pfam" id="PF23555">
    <property type="entry name" value="zf-RING_Vps41"/>
    <property type="match status" value="1"/>
</dbReference>
<dbReference type="PIRSF" id="PIRSF028921">
    <property type="entry name" value="VPS41"/>
    <property type="match status" value="1"/>
</dbReference>
<dbReference type="SMART" id="SM00299">
    <property type="entry name" value="CLH"/>
    <property type="match status" value="1"/>
</dbReference>
<dbReference type="SUPFAM" id="SSF48452">
    <property type="entry name" value="TPR-like"/>
    <property type="match status" value="1"/>
</dbReference>
<dbReference type="SUPFAM" id="SSF50978">
    <property type="entry name" value="WD40 repeat-like"/>
    <property type="match status" value="1"/>
</dbReference>
<dbReference type="PROSITE" id="PS50236">
    <property type="entry name" value="CHCR"/>
    <property type="match status" value="1"/>
</dbReference>
<dbReference type="PROSITE" id="PS50089">
    <property type="entry name" value="ZF_RING_2"/>
    <property type="match status" value="1"/>
</dbReference>
<accession>E7F590</accession>
<evidence type="ECO:0000250" key="1">
    <source>
        <dbReference type="UniProtKB" id="P49754"/>
    </source>
</evidence>
<evidence type="ECO:0000255" key="2">
    <source>
        <dbReference type="PROSITE-ProRule" id="PRU00175"/>
    </source>
</evidence>
<evidence type="ECO:0000255" key="3">
    <source>
        <dbReference type="PROSITE-ProRule" id="PRU01006"/>
    </source>
</evidence>
<evidence type="ECO:0000256" key="4">
    <source>
        <dbReference type="SAM" id="MobiDB-lite"/>
    </source>
</evidence>
<evidence type="ECO:0000269" key="5">
    <source>
    </source>
</evidence>
<evidence type="ECO:0000305" key="6"/>
<sequence length="854" mass="99092">MAEVEEQGRKLSEESTDESEEEDTEEEPKLKYERLTNGVTEILQKDAASCMTVHDKFLALGTHFGKVFLLDIQGNVTQKFEISSVKINQISLDESGDHVGICSEDGKVQVFGLYTREGFHENFDCPIKVVALHPQFSKSNNKQFVTGGNKLLLYERNWLNRWKTSVLHEGEGNITSVKWRGNLIAWANNVGVKIYDIGSKQRITNVLRDNTSLRPDMYPCSLCWKDNTTLIIGWGCSVKICAVKERDPTEMRDLPSRYVEIVSAFETEFFISGLAPLADQLVTLYYVKENSDHMEEEFRTRPRLDIIQPLPEGCEEISSDALTVRNFQENQCRDYRLEHSEGESLFYIISPKDIVVAKERDQDDHIDWLLEKKKYEEALMAAEISFKNIKRHDVQKIGMAYINHLVEKGDYDTAARKCQKVLGKNMDLWENEVYRFKTIGQLKAISQYLPRGDLRLRPAIYEMILHDFLKTDYEGFATLIREWPGELYNNMAIVQAVNEHLKKDPTNSILLTTLAELYTYDQRYDRALEIYLRLRHKDVYQLIHKHNLFSSIKDKIVLLMDFDKEKAVDMLLDNEDKISMDKVVEELKDRPELLHVYLHKLFKRDHHKGQKYHERQISLYAEFDRPNLLPFLRESMHCPLEKALEICQQRHFVEETVFLLSRMGNCRRALQMIMEELANVDKAIEFAKEQDDRELWEDLISYSIDKPPFITGLLNNIGTHVDPILLIHRIKEGMEIPNLRDSLVKILHDYNLQILLREGCKKILVADSLSLLQRMHRTQKKGVRVDEENICESCHTPILPSDTAQAFGVVVFHCRHMFHKECLPSPGSIPGIQYCNICSAKRRGPGSGILEMKK</sequence>
<proteinExistence type="evidence at protein level"/>
<feature type="chain" id="PRO_0000454897" description="Vacuolar protein sorting-associated protein 41 homolog">
    <location>
        <begin position="1"/>
        <end position="854"/>
    </location>
</feature>
<feature type="repeat" description="CHCR" evidence="3">
    <location>
        <begin position="568"/>
        <end position="712"/>
    </location>
</feature>
<feature type="zinc finger region" description="RING-type; atypical" evidence="2">
    <location>
        <begin position="791"/>
        <end position="839"/>
    </location>
</feature>
<feature type="region of interest" description="Disordered" evidence="4">
    <location>
        <begin position="1"/>
        <end position="30"/>
    </location>
</feature>
<feature type="compositionally biased region" description="Basic and acidic residues" evidence="4">
    <location>
        <begin position="1"/>
        <end position="13"/>
    </location>
</feature>
<feature type="compositionally biased region" description="Acidic residues" evidence="4">
    <location>
        <begin position="14"/>
        <end position="26"/>
    </location>
</feature>
<comment type="function">
    <text evidence="5">Plays a role in vesicle-mediated protein trafficking to lysosomal compartments including the endocytic membrane transport and autophagic pathways. Believed to act as a core component of the putative HOPS and CORVET endosomal tethering complexes.</text>
</comment>
<comment type="subunit">
    <text evidence="5">Core component of at least two putative endosomal tethering complexes, the homotypic fusion and vacuole protein sorting (HOPS) complex and the class C core vacuole/endosome tethering (CORVET) complex.</text>
</comment>
<comment type="subcellular location">
    <subcellularLocation>
        <location evidence="1">Endosome membrane</location>
        <topology evidence="1">Peripheral membrane protein</topology>
    </subcellularLocation>
    <subcellularLocation>
        <location evidence="1">Late endosome membrane</location>
        <topology evidence="1">Peripheral membrane protein</topology>
    </subcellularLocation>
    <subcellularLocation>
        <location evidence="1">Early endosome membrane</location>
        <topology evidence="1">Peripheral membrane protein</topology>
    </subcellularLocation>
    <subcellularLocation>
        <location evidence="1">Lysosome membrane</location>
        <topology evidence="1">Peripheral membrane protein</topology>
    </subcellularLocation>
    <subcellularLocation>
        <location evidence="1">Golgi apparatus</location>
        <location evidence="1">trans-Golgi network</location>
    </subcellularLocation>
    <subcellularLocation>
        <location evidence="1">Cytoplasmic vesicle</location>
        <location evidence="1">Clathrin-coated vesicle</location>
    </subcellularLocation>
    <subcellularLocation>
        <location evidence="1">Cytoplasm</location>
        <location evidence="1">Cytosol</location>
    </subcellularLocation>
</comment>
<comment type="disruption phenotype">
    <text evidence="5">Disruption of the gene results in melanocyte pigmentation defects, decreased body length, and bladder defects associated with abnormalities in surfactant production or distribution, consistent with abnormalities of lysosome-related organelles. Mutant animals also have defects in the optokinetic response and eye movement control system, suggesting cerebellar dysfunction. Microglia from mutant fish show morphologic abnormalities, with larger or more numerous lysosomal compartments and increased expression of acidic lysosomal markers compared to controls.</text>
</comment>
<comment type="similarity">
    <text evidence="6">Belongs to the VPS41 family.</text>
</comment>